<protein>
    <recommendedName>
        <fullName>Cytochrome b6-f complex subunit 6</fullName>
    </recommendedName>
    <alternativeName>
        <fullName>Cytochrome b6-f complex subunit PetL</fullName>
    </alternativeName>
    <alternativeName>
        <fullName>Cytochrome b6-f complex subunit VI</fullName>
    </alternativeName>
</protein>
<dbReference type="EMBL" id="AY522329">
    <property type="status" value="NOT_ANNOTATED_CDS"/>
    <property type="molecule type" value="Genomic_DNA"/>
</dbReference>
<dbReference type="RefSeq" id="YP_009161382.1">
    <property type="nucleotide sequence ID" value="NC_027678.1"/>
</dbReference>
<dbReference type="SMR" id="P0C394"/>
<dbReference type="Proteomes" id="UP000007015">
    <property type="component" value="Chloroplast"/>
</dbReference>
<dbReference type="GO" id="GO:0009535">
    <property type="term" value="C:chloroplast thylakoid membrane"/>
    <property type="evidence" value="ECO:0007669"/>
    <property type="project" value="UniProtKB-SubCell"/>
</dbReference>
<dbReference type="GO" id="GO:0009512">
    <property type="term" value="C:cytochrome b6f complex"/>
    <property type="evidence" value="ECO:0007669"/>
    <property type="project" value="InterPro"/>
</dbReference>
<dbReference type="GO" id="GO:0009536">
    <property type="term" value="C:plastid"/>
    <property type="evidence" value="ECO:0000305"/>
    <property type="project" value="Gramene"/>
</dbReference>
<dbReference type="GO" id="GO:0045158">
    <property type="term" value="F:electron transporter, transferring electrons within cytochrome b6/f complex of photosystem II activity"/>
    <property type="evidence" value="ECO:0007669"/>
    <property type="project" value="UniProtKB-UniRule"/>
</dbReference>
<dbReference type="GO" id="GO:0015979">
    <property type="term" value="P:photosynthesis"/>
    <property type="evidence" value="ECO:0007669"/>
    <property type="project" value="UniProtKB-KW"/>
</dbReference>
<dbReference type="HAMAP" id="MF_00433">
    <property type="entry name" value="Cytb6_f_PetL"/>
    <property type="match status" value="1"/>
</dbReference>
<dbReference type="InterPro" id="IPR007802">
    <property type="entry name" value="Cyt_b6/f_cplx_su6"/>
</dbReference>
<dbReference type="PANTHER" id="PTHR37266">
    <property type="entry name" value="CYTOCHROME B6-F COMPLEX SUBUNIT 6"/>
    <property type="match status" value="1"/>
</dbReference>
<dbReference type="PANTHER" id="PTHR37266:SF1">
    <property type="entry name" value="CYTOCHROME B6-F COMPLEX SUBUNIT 6"/>
    <property type="match status" value="1"/>
</dbReference>
<dbReference type="Pfam" id="PF05115">
    <property type="entry name" value="PetL"/>
    <property type="match status" value="1"/>
</dbReference>
<dbReference type="SUPFAM" id="SSF103436">
    <property type="entry name" value="PetL subunit of the cytochrome b6f complex"/>
    <property type="match status" value="1"/>
</dbReference>
<name>PETL_ORYSI</name>
<proteinExistence type="inferred from homology"/>
<reference key="1">
    <citation type="journal article" date="2004" name="Plant Physiol.">
        <title>A comparison of rice chloroplast genomes.</title>
        <authorList>
            <person name="Tang J."/>
            <person name="Xia H."/>
            <person name="Cao M."/>
            <person name="Zhang X."/>
            <person name="Zeng W."/>
            <person name="Hu S."/>
            <person name="Tong W."/>
            <person name="Wang J."/>
            <person name="Wang J."/>
            <person name="Yu J."/>
            <person name="Yang H."/>
            <person name="Zhu L."/>
        </authorList>
    </citation>
    <scope>NUCLEOTIDE SEQUENCE [LARGE SCALE GENOMIC DNA]</scope>
    <source>
        <strain>cv. 93-11</strain>
    </source>
</reference>
<evidence type="ECO:0000250" key="1"/>
<evidence type="ECO:0000255" key="2"/>
<evidence type="ECO:0000305" key="3"/>
<organism>
    <name type="scientific">Oryza sativa subsp. indica</name>
    <name type="common">Rice</name>
    <dbReference type="NCBI Taxonomy" id="39946"/>
    <lineage>
        <taxon>Eukaryota</taxon>
        <taxon>Viridiplantae</taxon>
        <taxon>Streptophyta</taxon>
        <taxon>Embryophyta</taxon>
        <taxon>Tracheophyta</taxon>
        <taxon>Spermatophyta</taxon>
        <taxon>Magnoliopsida</taxon>
        <taxon>Liliopsida</taxon>
        <taxon>Poales</taxon>
        <taxon>Poaceae</taxon>
        <taxon>BOP clade</taxon>
        <taxon>Oryzoideae</taxon>
        <taxon>Oryzeae</taxon>
        <taxon>Oryzinae</taxon>
        <taxon>Oryza</taxon>
        <taxon>Oryza sativa</taxon>
    </lineage>
</organism>
<gene>
    <name type="primary">petL</name>
</gene>
<keyword id="KW-0150">Chloroplast</keyword>
<keyword id="KW-0249">Electron transport</keyword>
<keyword id="KW-0472">Membrane</keyword>
<keyword id="KW-0602">Photosynthesis</keyword>
<keyword id="KW-0934">Plastid</keyword>
<keyword id="KW-1185">Reference proteome</keyword>
<keyword id="KW-0793">Thylakoid</keyword>
<keyword id="KW-0812">Transmembrane</keyword>
<keyword id="KW-1133">Transmembrane helix</keyword>
<keyword id="KW-0813">Transport</keyword>
<comment type="function">
    <text evidence="1">Component of the cytochrome b6-f complex, which mediates electron transfer between photosystem II (PSII) and photosystem I (PSI), cyclic electron flow around PSI, and state transitions. PetL is important for photoautotrophic growth as well as for electron transfer efficiency and stability of the cytochrome b6-f complex (By similarity).</text>
</comment>
<comment type="subunit">
    <text evidence="1">The 4 large subunits of the cytochrome b6-f complex are cytochrome b6, subunit IV (17 kDa polypeptide, PetD), cytochrome f and the Rieske protein, while the 4 small subunits are PetG, PetL, PetM and PetN. The complex functions as a dimer (By similarity).</text>
</comment>
<comment type="subcellular location">
    <subcellularLocation>
        <location evidence="1">Plastid</location>
        <location evidence="1">Chloroplast thylakoid membrane</location>
        <topology evidence="1">Single-pass membrane protein</topology>
    </subcellularLocation>
</comment>
<comment type="similarity">
    <text evidence="3">Belongs to the PetL family.</text>
</comment>
<feature type="chain" id="PRO_0000289025" description="Cytochrome b6-f complex subunit 6">
    <location>
        <begin position="1"/>
        <end position="31"/>
    </location>
</feature>
<feature type="transmembrane region" description="Helical" evidence="2">
    <location>
        <begin position="4"/>
        <end position="24"/>
    </location>
</feature>
<sequence>MLTITSYFGFLLAALTLTLALFIGLNKIRLI</sequence>
<accession>P0C394</accession>
<geneLocation type="chloroplast"/>